<accession>Q973F1</accession>
<accession>F9VNR2</accession>
<reference key="1">
    <citation type="journal article" date="2001" name="DNA Res.">
        <title>Complete genome sequence of an aerobic thermoacidophilic Crenarchaeon, Sulfolobus tokodaii strain7.</title>
        <authorList>
            <person name="Kawarabayasi Y."/>
            <person name="Hino Y."/>
            <person name="Horikawa H."/>
            <person name="Jin-no K."/>
            <person name="Takahashi M."/>
            <person name="Sekine M."/>
            <person name="Baba S."/>
            <person name="Ankai A."/>
            <person name="Kosugi H."/>
            <person name="Hosoyama A."/>
            <person name="Fukui S."/>
            <person name="Nagai Y."/>
            <person name="Nishijima K."/>
            <person name="Otsuka R."/>
            <person name="Nakazawa H."/>
            <person name="Takamiya M."/>
            <person name="Kato Y."/>
            <person name="Yoshizawa T."/>
            <person name="Tanaka T."/>
            <person name="Kudoh Y."/>
            <person name="Yamazaki J."/>
            <person name="Kushida N."/>
            <person name="Oguchi A."/>
            <person name="Aoki K."/>
            <person name="Masuda S."/>
            <person name="Yanagii M."/>
            <person name="Nishimura M."/>
            <person name="Yamagishi A."/>
            <person name="Oshima T."/>
            <person name="Kikuchi H."/>
        </authorList>
    </citation>
    <scope>NUCLEOTIDE SEQUENCE [LARGE SCALE GENOMIC DNA]</scope>
    <source>
        <strain>DSM 16993 / JCM 10545 / NBRC 100140 / 7</strain>
    </source>
</reference>
<gene>
    <name evidence="1" type="primary">rnz</name>
    <name type="ordered locus">STK_09480</name>
</gene>
<organism>
    <name type="scientific">Sulfurisphaera tokodaii (strain DSM 16993 / JCM 10545 / NBRC 100140 / 7)</name>
    <name type="common">Sulfolobus tokodaii</name>
    <dbReference type="NCBI Taxonomy" id="273063"/>
    <lineage>
        <taxon>Archaea</taxon>
        <taxon>Thermoproteota</taxon>
        <taxon>Thermoprotei</taxon>
        <taxon>Sulfolobales</taxon>
        <taxon>Sulfolobaceae</taxon>
        <taxon>Sulfurisphaera</taxon>
    </lineage>
</organism>
<keyword id="KW-0255">Endonuclease</keyword>
<keyword id="KW-0378">Hydrolase</keyword>
<keyword id="KW-0479">Metal-binding</keyword>
<keyword id="KW-0540">Nuclease</keyword>
<keyword id="KW-1185">Reference proteome</keyword>
<keyword id="KW-0819">tRNA processing</keyword>
<keyword id="KW-0862">Zinc</keyword>
<evidence type="ECO:0000255" key="1">
    <source>
        <dbReference type="HAMAP-Rule" id="MF_01818"/>
    </source>
</evidence>
<name>RNZ_SULTO</name>
<comment type="function">
    <text evidence="1">Zinc phosphodiesterase, which displays some tRNA 3'-processing endonuclease activity. Probably involved in tRNA maturation, by removing a 3'-trailer from precursor tRNA.</text>
</comment>
<comment type="catalytic activity">
    <reaction evidence="1">
        <text>Endonucleolytic cleavage of RNA, removing extra 3' nucleotides from tRNA precursor, generating 3' termini of tRNAs. A 3'-hydroxy group is left at the tRNA terminus and a 5'-phosphoryl group is left at the trailer molecule.</text>
        <dbReference type="EC" id="3.1.26.11"/>
    </reaction>
</comment>
<comment type="cofactor">
    <cofactor evidence="1">
        <name>Zn(2+)</name>
        <dbReference type="ChEBI" id="CHEBI:29105"/>
    </cofactor>
    <text evidence="1">Binds 2 Zn(2+) ions.</text>
</comment>
<comment type="subunit">
    <text evidence="1">Homodimer.</text>
</comment>
<comment type="similarity">
    <text evidence="1">Belongs to the RNase Z family.</text>
</comment>
<feature type="chain" id="PRO_0000155938" description="Ribonuclease Z">
    <location>
        <begin position="1"/>
        <end position="293"/>
    </location>
</feature>
<feature type="active site" description="Proton acceptor" evidence="1">
    <location>
        <position position="64"/>
    </location>
</feature>
<feature type="binding site" evidence="1">
    <location>
        <position position="60"/>
    </location>
    <ligand>
        <name>Zn(2+)</name>
        <dbReference type="ChEBI" id="CHEBI:29105"/>
        <label>1</label>
        <note>catalytic</note>
    </ligand>
</feature>
<feature type="binding site" evidence="1">
    <location>
        <position position="62"/>
    </location>
    <ligand>
        <name>Zn(2+)</name>
        <dbReference type="ChEBI" id="CHEBI:29105"/>
        <label>1</label>
        <note>catalytic</note>
    </ligand>
</feature>
<feature type="binding site" evidence="1">
    <location>
        <position position="64"/>
    </location>
    <ligand>
        <name>Zn(2+)</name>
        <dbReference type="ChEBI" id="CHEBI:29105"/>
        <label>2</label>
        <note>catalytic</note>
    </ligand>
</feature>
<feature type="binding site" evidence="1">
    <location>
        <position position="65"/>
    </location>
    <ligand>
        <name>Zn(2+)</name>
        <dbReference type="ChEBI" id="CHEBI:29105"/>
        <label>2</label>
        <note>catalytic</note>
    </ligand>
</feature>
<feature type="binding site" evidence="1">
    <location>
        <position position="132"/>
    </location>
    <ligand>
        <name>Zn(2+)</name>
        <dbReference type="ChEBI" id="CHEBI:29105"/>
        <label>1</label>
        <note>catalytic</note>
    </ligand>
</feature>
<feature type="binding site" evidence="1">
    <location>
        <position position="200"/>
    </location>
    <ligand>
        <name>Zn(2+)</name>
        <dbReference type="ChEBI" id="CHEBI:29105"/>
        <label>1</label>
        <note>catalytic</note>
    </ligand>
</feature>
<feature type="binding site" evidence="1">
    <location>
        <position position="200"/>
    </location>
    <ligand>
        <name>Zn(2+)</name>
        <dbReference type="ChEBI" id="CHEBI:29105"/>
        <label>2</label>
        <note>catalytic</note>
    </ligand>
</feature>
<feature type="binding site" evidence="1">
    <location>
        <position position="256"/>
    </location>
    <ligand>
        <name>Zn(2+)</name>
        <dbReference type="ChEBI" id="CHEBI:29105"/>
        <label>2</label>
        <note>catalytic</note>
    </ligand>
</feature>
<sequence length="293" mass="34066">MITVYFIGTGGGAPNKRGLPAIMVRREGFDALFDCGEGTQWRMMEHNLSFMKIKLIGITHMHGDHVLGLPGMIETMGMYSRKESLLLMGPKELKEFLEDIFKKTYFYPNFEIQIIDKYEDENIKISTFETCHTIESQGYLFEEKDRLKIDIDKLRKEGIKDWRIIRMLKEGKRVEINGKVLLPEDYLIVKKGIRIAYTGDTGPCEKVINAVKDVDLLIHDSTFIDEKEAYKYGHSNSYDAAYVALKANVKRLALFHISPRYDDTYEMLIKAKRIFEKTFVAEPLSYYIIRQKE</sequence>
<protein>
    <recommendedName>
        <fullName evidence="1">Ribonuclease Z</fullName>
        <shortName evidence="1">RNase Z</shortName>
        <ecNumber evidence="1">3.1.26.11</ecNumber>
    </recommendedName>
    <alternativeName>
        <fullName evidence="1">tRNA 3 endonuclease</fullName>
    </alternativeName>
    <alternativeName>
        <fullName evidence="1">tRNase Z</fullName>
    </alternativeName>
</protein>
<dbReference type="EC" id="3.1.26.11" evidence="1"/>
<dbReference type="EMBL" id="BA000023">
    <property type="protein sequence ID" value="BAK54420.1"/>
    <property type="molecule type" value="Genomic_DNA"/>
</dbReference>
<dbReference type="RefSeq" id="WP_010978944.1">
    <property type="nucleotide sequence ID" value="NC_003106.2"/>
</dbReference>
<dbReference type="SMR" id="Q973F1"/>
<dbReference type="STRING" id="273063.STK_09480"/>
<dbReference type="GeneID" id="1458913"/>
<dbReference type="KEGG" id="sto:STK_09480"/>
<dbReference type="PATRIC" id="fig|273063.9.peg.1060"/>
<dbReference type="eggNOG" id="arCOG00501">
    <property type="taxonomic scope" value="Archaea"/>
</dbReference>
<dbReference type="OrthoDB" id="85118at2157"/>
<dbReference type="Proteomes" id="UP000001015">
    <property type="component" value="Chromosome"/>
</dbReference>
<dbReference type="GO" id="GO:0042781">
    <property type="term" value="F:3'-tRNA processing endoribonuclease activity"/>
    <property type="evidence" value="ECO:0007669"/>
    <property type="project" value="UniProtKB-UniRule"/>
</dbReference>
<dbReference type="GO" id="GO:0008270">
    <property type="term" value="F:zinc ion binding"/>
    <property type="evidence" value="ECO:0007669"/>
    <property type="project" value="UniProtKB-UniRule"/>
</dbReference>
<dbReference type="CDD" id="cd07717">
    <property type="entry name" value="RNaseZ_ZiPD-like_MBL-fold"/>
    <property type="match status" value="1"/>
</dbReference>
<dbReference type="Gene3D" id="3.60.15.10">
    <property type="entry name" value="Ribonuclease Z/Hydroxyacylglutathione hydrolase-like"/>
    <property type="match status" value="1"/>
</dbReference>
<dbReference type="HAMAP" id="MF_01818">
    <property type="entry name" value="RNase_Z_BN"/>
    <property type="match status" value="1"/>
</dbReference>
<dbReference type="InterPro" id="IPR001279">
    <property type="entry name" value="Metallo-B-lactamas"/>
</dbReference>
<dbReference type="InterPro" id="IPR036866">
    <property type="entry name" value="RibonucZ/Hydroxyglut_hydro"/>
</dbReference>
<dbReference type="InterPro" id="IPR013471">
    <property type="entry name" value="RNase_Z/BN"/>
</dbReference>
<dbReference type="NCBIfam" id="NF000801">
    <property type="entry name" value="PRK00055.1-3"/>
    <property type="match status" value="1"/>
</dbReference>
<dbReference type="NCBIfam" id="TIGR02651">
    <property type="entry name" value="RNase_Z"/>
    <property type="match status" value="1"/>
</dbReference>
<dbReference type="PANTHER" id="PTHR46018">
    <property type="entry name" value="ZINC PHOSPHODIESTERASE ELAC PROTEIN 1"/>
    <property type="match status" value="1"/>
</dbReference>
<dbReference type="PANTHER" id="PTHR46018:SF2">
    <property type="entry name" value="ZINC PHOSPHODIESTERASE ELAC PROTEIN 1"/>
    <property type="match status" value="1"/>
</dbReference>
<dbReference type="Pfam" id="PF00753">
    <property type="entry name" value="Lactamase_B"/>
    <property type="match status" value="1"/>
</dbReference>
<dbReference type="Pfam" id="PF12706">
    <property type="entry name" value="Lactamase_B_2"/>
    <property type="match status" value="1"/>
</dbReference>
<dbReference type="SUPFAM" id="SSF56281">
    <property type="entry name" value="Metallo-hydrolase/oxidoreductase"/>
    <property type="match status" value="1"/>
</dbReference>
<proteinExistence type="inferred from homology"/>